<evidence type="ECO:0000255" key="1">
    <source>
        <dbReference type="HAMAP-Rule" id="MF_00036"/>
    </source>
</evidence>
<keyword id="KW-0030">Aminoacyl-tRNA synthetase</keyword>
<keyword id="KW-0067">ATP-binding</keyword>
<keyword id="KW-0963">Cytoplasm</keyword>
<keyword id="KW-0436">Ligase</keyword>
<keyword id="KW-0479">Metal-binding</keyword>
<keyword id="KW-0547">Nucleotide-binding</keyword>
<keyword id="KW-0648">Protein biosynthesis</keyword>
<keyword id="KW-0694">RNA-binding</keyword>
<keyword id="KW-0820">tRNA-binding</keyword>
<keyword id="KW-0862">Zinc</keyword>
<name>SYA_COLP3</name>
<accession>Q487H5</accession>
<dbReference type="EC" id="6.1.1.7" evidence="1"/>
<dbReference type="EMBL" id="CP000083">
    <property type="protein sequence ID" value="AAZ25326.1"/>
    <property type="molecule type" value="Genomic_DNA"/>
</dbReference>
<dbReference type="RefSeq" id="WP_011041884.1">
    <property type="nucleotide sequence ID" value="NC_003910.7"/>
</dbReference>
<dbReference type="SMR" id="Q487H5"/>
<dbReference type="STRING" id="167879.CPS_1042"/>
<dbReference type="KEGG" id="cps:CPS_1042"/>
<dbReference type="eggNOG" id="COG0013">
    <property type="taxonomic scope" value="Bacteria"/>
</dbReference>
<dbReference type="HOGENOM" id="CLU_004485_1_1_6"/>
<dbReference type="Proteomes" id="UP000000547">
    <property type="component" value="Chromosome"/>
</dbReference>
<dbReference type="GO" id="GO:0005829">
    <property type="term" value="C:cytosol"/>
    <property type="evidence" value="ECO:0007669"/>
    <property type="project" value="TreeGrafter"/>
</dbReference>
<dbReference type="GO" id="GO:0004813">
    <property type="term" value="F:alanine-tRNA ligase activity"/>
    <property type="evidence" value="ECO:0007669"/>
    <property type="project" value="UniProtKB-UniRule"/>
</dbReference>
<dbReference type="GO" id="GO:0002161">
    <property type="term" value="F:aminoacyl-tRNA deacylase activity"/>
    <property type="evidence" value="ECO:0007669"/>
    <property type="project" value="TreeGrafter"/>
</dbReference>
<dbReference type="GO" id="GO:0005524">
    <property type="term" value="F:ATP binding"/>
    <property type="evidence" value="ECO:0007669"/>
    <property type="project" value="UniProtKB-UniRule"/>
</dbReference>
<dbReference type="GO" id="GO:0000049">
    <property type="term" value="F:tRNA binding"/>
    <property type="evidence" value="ECO:0007669"/>
    <property type="project" value="UniProtKB-KW"/>
</dbReference>
<dbReference type="GO" id="GO:0008270">
    <property type="term" value="F:zinc ion binding"/>
    <property type="evidence" value="ECO:0007669"/>
    <property type="project" value="UniProtKB-UniRule"/>
</dbReference>
<dbReference type="GO" id="GO:0006419">
    <property type="term" value="P:alanyl-tRNA aminoacylation"/>
    <property type="evidence" value="ECO:0007669"/>
    <property type="project" value="UniProtKB-UniRule"/>
</dbReference>
<dbReference type="GO" id="GO:0045892">
    <property type="term" value="P:negative regulation of DNA-templated transcription"/>
    <property type="evidence" value="ECO:0007669"/>
    <property type="project" value="TreeGrafter"/>
</dbReference>
<dbReference type="CDD" id="cd00673">
    <property type="entry name" value="AlaRS_core"/>
    <property type="match status" value="1"/>
</dbReference>
<dbReference type="FunFam" id="3.10.310.40:FF:000001">
    <property type="entry name" value="Alanine--tRNA ligase"/>
    <property type="match status" value="1"/>
</dbReference>
<dbReference type="FunFam" id="3.30.54.20:FF:000001">
    <property type="entry name" value="Alanine--tRNA ligase"/>
    <property type="match status" value="1"/>
</dbReference>
<dbReference type="FunFam" id="3.30.930.10:FF:000004">
    <property type="entry name" value="Alanine--tRNA ligase"/>
    <property type="match status" value="1"/>
</dbReference>
<dbReference type="FunFam" id="3.30.980.10:FF:000004">
    <property type="entry name" value="Alanine--tRNA ligase, cytoplasmic"/>
    <property type="match status" value="1"/>
</dbReference>
<dbReference type="Gene3D" id="2.40.30.130">
    <property type="match status" value="1"/>
</dbReference>
<dbReference type="Gene3D" id="3.10.310.40">
    <property type="match status" value="1"/>
</dbReference>
<dbReference type="Gene3D" id="3.30.54.20">
    <property type="match status" value="1"/>
</dbReference>
<dbReference type="Gene3D" id="6.10.250.550">
    <property type="match status" value="1"/>
</dbReference>
<dbReference type="Gene3D" id="3.30.930.10">
    <property type="entry name" value="Bira Bifunctional Protein, Domain 2"/>
    <property type="match status" value="1"/>
</dbReference>
<dbReference type="Gene3D" id="3.30.980.10">
    <property type="entry name" value="Threonyl-trna Synthetase, Chain A, domain 2"/>
    <property type="match status" value="1"/>
</dbReference>
<dbReference type="HAMAP" id="MF_00036_B">
    <property type="entry name" value="Ala_tRNA_synth_B"/>
    <property type="match status" value="1"/>
</dbReference>
<dbReference type="InterPro" id="IPR045864">
    <property type="entry name" value="aa-tRNA-synth_II/BPL/LPL"/>
</dbReference>
<dbReference type="InterPro" id="IPR002318">
    <property type="entry name" value="Ala-tRNA-lgiase_IIc"/>
</dbReference>
<dbReference type="InterPro" id="IPR018162">
    <property type="entry name" value="Ala-tRNA-ligase_IIc_anticod-bd"/>
</dbReference>
<dbReference type="InterPro" id="IPR018165">
    <property type="entry name" value="Ala-tRNA-synth_IIc_core"/>
</dbReference>
<dbReference type="InterPro" id="IPR018164">
    <property type="entry name" value="Ala-tRNA-synth_IIc_N"/>
</dbReference>
<dbReference type="InterPro" id="IPR050058">
    <property type="entry name" value="Ala-tRNA_ligase"/>
</dbReference>
<dbReference type="InterPro" id="IPR023033">
    <property type="entry name" value="Ala_tRNA_ligase_euk/bac"/>
</dbReference>
<dbReference type="InterPro" id="IPR003156">
    <property type="entry name" value="DHHA1_dom"/>
</dbReference>
<dbReference type="InterPro" id="IPR018163">
    <property type="entry name" value="Thr/Ala-tRNA-synth_IIc_edit"/>
</dbReference>
<dbReference type="InterPro" id="IPR009000">
    <property type="entry name" value="Transl_B-barrel_sf"/>
</dbReference>
<dbReference type="InterPro" id="IPR012947">
    <property type="entry name" value="tRNA_SAD"/>
</dbReference>
<dbReference type="NCBIfam" id="TIGR00344">
    <property type="entry name" value="alaS"/>
    <property type="match status" value="1"/>
</dbReference>
<dbReference type="PANTHER" id="PTHR11777:SF9">
    <property type="entry name" value="ALANINE--TRNA LIGASE, CYTOPLASMIC"/>
    <property type="match status" value="1"/>
</dbReference>
<dbReference type="PANTHER" id="PTHR11777">
    <property type="entry name" value="ALANYL-TRNA SYNTHETASE"/>
    <property type="match status" value="1"/>
</dbReference>
<dbReference type="Pfam" id="PF02272">
    <property type="entry name" value="DHHA1"/>
    <property type="match status" value="1"/>
</dbReference>
<dbReference type="Pfam" id="PF01411">
    <property type="entry name" value="tRNA-synt_2c"/>
    <property type="match status" value="1"/>
</dbReference>
<dbReference type="Pfam" id="PF07973">
    <property type="entry name" value="tRNA_SAD"/>
    <property type="match status" value="1"/>
</dbReference>
<dbReference type="PRINTS" id="PR00980">
    <property type="entry name" value="TRNASYNTHALA"/>
</dbReference>
<dbReference type="SMART" id="SM00863">
    <property type="entry name" value="tRNA_SAD"/>
    <property type="match status" value="1"/>
</dbReference>
<dbReference type="SUPFAM" id="SSF55681">
    <property type="entry name" value="Class II aaRS and biotin synthetases"/>
    <property type="match status" value="1"/>
</dbReference>
<dbReference type="SUPFAM" id="SSF101353">
    <property type="entry name" value="Putative anticodon-binding domain of alanyl-tRNA synthetase (AlaRS)"/>
    <property type="match status" value="1"/>
</dbReference>
<dbReference type="SUPFAM" id="SSF55186">
    <property type="entry name" value="ThrRS/AlaRS common domain"/>
    <property type="match status" value="1"/>
</dbReference>
<dbReference type="SUPFAM" id="SSF50447">
    <property type="entry name" value="Translation proteins"/>
    <property type="match status" value="1"/>
</dbReference>
<dbReference type="PROSITE" id="PS50860">
    <property type="entry name" value="AA_TRNA_LIGASE_II_ALA"/>
    <property type="match status" value="1"/>
</dbReference>
<sequence length="876" mass="96237">MIKSTAEVRQAFLDFFATKQHQIVKSSSLVPGNDATLLFTNAGMVPFKDVFLGAETRSYTRATSAQRCVRAGGKHNDLENVGYTARHHTFFEMMGNFSFGDYFKNDAISYAWEFLTGELGLAKEKLLVTVYATDEEAFSYWRDEVGVPEDKIIRIGDKSANKKYESDNFWSMGDTGPCGPCSEIFYDHGEDIFGGPPGSPDEDGDRFIEIWNIVFMQFNRQSDGRMDPLPNPSIDTGMGLERISAIMQNVHSNYEIDIFQALIKDTAALLDCSDLEHKSLRVIGDHIRSCSFLIVDGVVPSNEGRGYVLRRIIRRAIRHGHKLEATGHFFHKLVASLIAQMGEAYPELAQQQAIIEKLLRIEEEQFGRTLDRGMILLEDILANLSGDIIKGDDVFKLYDTYGFPADLTADIARERNLKIDKDGFDVAMKQQRERAQQASQFGTDYNQQLKSDQNTAFKGYDNDSYSATVVELFNSQDQDPVSQLNSGEQGIVILDHTPFYAESGGQVGDSGLLHLDGGVFEVTDTIKLGNAFAHRGTAHTDVGLNRRVKAEINVERRAAIVKNHTATHLLHEALRKVLGEHVTQKGSLCDSDKLRFDFSHFEGVTAQELHDVEQMVNNEIRRNHAKQTESMYIEEAKAKGAMALFGEKYDDEVRVVTLGDFSIELCGGVHVNRTGDIGFLKIVSESGIAAGVRRIEAVTGTGALDFINQQTASLTTIAALVKSDVTNASSKVELLISRSKQLEKEIGQLKQELAAQAGSDLVNNTIEINGVKVLIADLGSVESKALRGMVDELKNKMQSGVIMLATANGPKVGLIAGVTKDLVGRVKAGDLVNMVAQQVGGKGGGRPDMAQAGGSQPENITSALESVSAWLTEKLA</sequence>
<proteinExistence type="inferred from homology"/>
<feature type="chain" id="PRO_0000075096" description="Alanine--tRNA ligase">
    <location>
        <begin position="1"/>
        <end position="876"/>
    </location>
</feature>
<feature type="binding site" evidence="1">
    <location>
        <position position="564"/>
    </location>
    <ligand>
        <name>Zn(2+)</name>
        <dbReference type="ChEBI" id="CHEBI:29105"/>
    </ligand>
</feature>
<feature type="binding site" evidence="1">
    <location>
        <position position="568"/>
    </location>
    <ligand>
        <name>Zn(2+)</name>
        <dbReference type="ChEBI" id="CHEBI:29105"/>
    </ligand>
</feature>
<feature type="binding site" evidence="1">
    <location>
        <position position="666"/>
    </location>
    <ligand>
        <name>Zn(2+)</name>
        <dbReference type="ChEBI" id="CHEBI:29105"/>
    </ligand>
</feature>
<feature type="binding site" evidence="1">
    <location>
        <position position="670"/>
    </location>
    <ligand>
        <name>Zn(2+)</name>
        <dbReference type="ChEBI" id="CHEBI:29105"/>
    </ligand>
</feature>
<gene>
    <name evidence="1" type="primary">alaS</name>
    <name type="ordered locus">CPS_1042</name>
</gene>
<comment type="function">
    <text evidence="1">Catalyzes the attachment of alanine to tRNA(Ala) in a two-step reaction: alanine is first activated by ATP to form Ala-AMP and then transferred to the acceptor end of tRNA(Ala). Also edits incorrectly charged Ser-tRNA(Ala) and Gly-tRNA(Ala) via its editing domain.</text>
</comment>
<comment type="catalytic activity">
    <reaction evidence="1">
        <text>tRNA(Ala) + L-alanine + ATP = L-alanyl-tRNA(Ala) + AMP + diphosphate</text>
        <dbReference type="Rhea" id="RHEA:12540"/>
        <dbReference type="Rhea" id="RHEA-COMP:9657"/>
        <dbReference type="Rhea" id="RHEA-COMP:9923"/>
        <dbReference type="ChEBI" id="CHEBI:30616"/>
        <dbReference type="ChEBI" id="CHEBI:33019"/>
        <dbReference type="ChEBI" id="CHEBI:57972"/>
        <dbReference type="ChEBI" id="CHEBI:78442"/>
        <dbReference type="ChEBI" id="CHEBI:78497"/>
        <dbReference type="ChEBI" id="CHEBI:456215"/>
        <dbReference type="EC" id="6.1.1.7"/>
    </reaction>
</comment>
<comment type="cofactor">
    <cofactor evidence="1">
        <name>Zn(2+)</name>
        <dbReference type="ChEBI" id="CHEBI:29105"/>
    </cofactor>
    <text evidence="1">Binds 1 zinc ion per subunit.</text>
</comment>
<comment type="subcellular location">
    <subcellularLocation>
        <location evidence="1">Cytoplasm</location>
    </subcellularLocation>
</comment>
<comment type="domain">
    <text evidence="1">Consists of three domains; the N-terminal catalytic domain, the editing domain and the C-terminal C-Ala domain. The editing domain removes incorrectly charged amino acids, while the C-Ala domain, along with tRNA(Ala), serves as a bridge to cooperatively bring together the editing and aminoacylation centers thus stimulating deacylation of misacylated tRNAs.</text>
</comment>
<comment type="similarity">
    <text evidence="1">Belongs to the class-II aminoacyl-tRNA synthetase family.</text>
</comment>
<protein>
    <recommendedName>
        <fullName evidence="1">Alanine--tRNA ligase</fullName>
        <ecNumber evidence="1">6.1.1.7</ecNumber>
    </recommendedName>
    <alternativeName>
        <fullName evidence="1">Alanyl-tRNA synthetase</fullName>
        <shortName evidence="1">AlaRS</shortName>
    </alternativeName>
</protein>
<reference key="1">
    <citation type="journal article" date="2005" name="Proc. Natl. Acad. Sci. U.S.A.">
        <title>The psychrophilic lifestyle as revealed by the genome sequence of Colwellia psychrerythraea 34H through genomic and proteomic analyses.</title>
        <authorList>
            <person name="Methe B.A."/>
            <person name="Nelson K.E."/>
            <person name="Deming J.W."/>
            <person name="Momen B."/>
            <person name="Melamud E."/>
            <person name="Zhang X."/>
            <person name="Moult J."/>
            <person name="Madupu R."/>
            <person name="Nelson W.C."/>
            <person name="Dodson R.J."/>
            <person name="Brinkac L.M."/>
            <person name="Daugherty S.C."/>
            <person name="Durkin A.S."/>
            <person name="DeBoy R.T."/>
            <person name="Kolonay J.F."/>
            <person name="Sullivan S.A."/>
            <person name="Zhou L."/>
            <person name="Davidsen T.M."/>
            <person name="Wu M."/>
            <person name="Huston A.L."/>
            <person name="Lewis M."/>
            <person name="Weaver B."/>
            <person name="Weidman J.F."/>
            <person name="Khouri H."/>
            <person name="Utterback T.R."/>
            <person name="Feldblyum T.V."/>
            <person name="Fraser C.M."/>
        </authorList>
    </citation>
    <scope>NUCLEOTIDE SEQUENCE [LARGE SCALE GENOMIC DNA]</scope>
    <source>
        <strain>34H / ATCC BAA-681</strain>
    </source>
</reference>
<organism>
    <name type="scientific">Colwellia psychrerythraea (strain 34H / ATCC BAA-681)</name>
    <name type="common">Vibrio psychroerythus</name>
    <dbReference type="NCBI Taxonomy" id="167879"/>
    <lineage>
        <taxon>Bacteria</taxon>
        <taxon>Pseudomonadati</taxon>
        <taxon>Pseudomonadota</taxon>
        <taxon>Gammaproteobacteria</taxon>
        <taxon>Alteromonadales</taxon>
        <taxon>Colwelliaceae</taxon>
        <taxon>Colwellia</taxon>
    </lineage>
</organism>